<sequence length="187" mass="19937">MRLVLLGPPGSGKGTQAAQMKETLQIPHISTGDLLRSEVVAGTPLGLQAKQVMAQGDLVSDAILIGMLESRLSHTDVVKGFILDGYPRNLSQAAALDGLLAKLGHPLNAVVQLEVPTDVLVERIAGRAQAEGREDDTPDAVRKRLQVYNDSTAPVIGFYQQRGILLRVDGVGRLDEVSQRIVVALGC</sequence>
<proteinExistence type="inferred from homology"/>
<keyword id="KW-0067">ATP-binding</keyword>
<keyword id="KW-0963">Cytoplasm</keyword>
<keyword id="KW-0418">Kinase</keyword>
<keyword id="KW-0545">Nucleotide biosynthesis</keyword>
<keyword id="KW-0547">Nucleotide-binding</keyword>
<keyword id="KW-0808">Transferase</keyword>
<evidence type="ECO:0000255" key="1">
    <source>
        <dbReference type="HAMAP-Rule" id="MF_00235"/>
    </source>
</evidence>
<evidence type="ECO:0000305" key="2"/>
<feature type="chain" id="PRO_0000158891" description="Adenylate kinase">
    <location>
        <begin position="1"/>
        <end position="187"/>
    </location>
</feature>
<feature type="region of interest" description="NMP" evidence="1">
    <location>
        <begin position="30"/>
        <end position="59"/>
    </location>
</feature>
<feature type="region of interest" description="LID" evidence="1">
    <location>
        <begin position="126"/>
        <end position="136"/>
    </location>
</feature>
<feature type="binding site" evidence="1">
    <location>
        <begin position="10"/>
        <end position="15"/>
    </location>
    <ligand>
        <name>ATP</name>
        <dbReference type="ChEBI" id="CHEBI:30616"/>
    </ligand>
</feature>
<feature type="binding site" evidence="1">
    <location>
        <position position="31"/>
    </location>
    <ligand>
        <name>AMP</name>
        <dbReference type="ChEBI" id="CHEBI:456215"/>
    </ligand>
</feature>
<feature type="binding site" evidence="1">
    <location>
        <position position="36"/>
    </location>
    <ligand>
        <name>AMP</name>
        <dbReference type="ChEBI" id="CHEBI:456215"/>
    </ligand>
</feature>
<feature type="binding site" evidence="1">
    <location>
        <begin position="57"/>
        <end position="59"/>
    </location>
    <ligand>
        <name>AMP</name>
        <dbReference type="ChEBI" id="CHEBI:456215"/>
    </ligand>
</feature>
<feature type="binding site" evidence="1">
    <location>
        <begin position="85"/>
        <end position="88"/>
    </location>
    <ligand>
        <name>AMP</name>
        <dbReference type="ChEBI" id="CHEBI:456215"/>
    </ligand>
</feature>
<feature type="binding site" evidence="1">
    <location>
        <position position="92"/>
    </location>
    <ligand>
        <name>AMP</name>
        <dbReference type="ChEBI" id="CHEBI:456215"/>
    </ligand>
</feature>
<feature type="binding site" evidence="1">
    <location>
        <position position="127"/>
    </location>
    <ligand>
        <name>ATP</name>
        <dbReference type="ChEBI" id="CHEBI:30616"/>
    </ligand>
</feature>
<feature type="binding site" evidence="1">
    <location>
        <position position="133"/>
    </location>
    <ligand>
        <name>AMP</name>
        <dbReference type="ChEBI" id="CHEBI:456215"/>
    </ligand>
</feature>
<feature type="binding site" evidence="1">
    <location>
        <position position="144"/>
    </location>
    <ligand>
        <name>AMP</name>
        <dbReference type="ChEBI" id="CHEBI:456215"/>
    </ligand>
</feature>
<feature type="binding site" evidence="1">
    <location>
        <position position="172"/>
    </location>
    <ligand>
        <name>ATP</name>
        <dbReference type="ChEBI" id="CHEBI:30616"/>
    </ligand>
</feature>
<comment type="function">
    <text evidence="1">Catalyzes the reversible transfer of the terminal phosphate group between ATP and AMP. Plays an important role in cellular energy homeostasis and in adenine nucleotide metabolism.</text>
</comment>
<comment type="catalytic activity">
    <reaction evidence="1">
        <text>AMP + ATP = 2 ADP</text>
        <dbReference type="Rhea" id="RHEA:12973"/>
        <dbReference type="ChEBI" id="CHEBI:30616"/>
        <dbReference type="ChEBI" id="CHEBI:456215"/>
        <dbReference type="ChEBI" id="CHEBI:456216"/>
        <dbReference type="EC" id="2.7.4.3"/>
    </reaction>
</comment>
<comment type="pathway">
    <text evidence="1">Purine metabolism; AMP biosynthesis via salvage pathway; AMP from ADP: step 1/1.</text>
</comment>
<comment type="subunit">
    <text evidence="1">Monomer.</text>
</comment>
<comment type="subcellular location">
    <subcellularLocation>
        <location evidence="1">Cytoplasm</location>
    </subcellularLocation>
</comment>
<comment type="domain">
    <text evidence="1">Consists of three domains, a large central CORE domain and two small peripheral domains, NMPbind and LID, which undergo movements during catalysis. The LID domain closes over the site of phosphoryl transfer upon ATP binding. Assembling and dissambling the active center during each catalytic cycle provides an effective means to prevent ATP hydrolysis.</text>
</comment>
<comment type="similarity">
    <text evidence="1">Belongs to the adenylate kinase family.</text>
</comment>
<comment type="sequence caution" evidence="2">
    <conflict type="erroneous initiation">
        <sequence resource="EMBL-CDS" id="AAF83088"/>
    </conflict>
</comment>
<accession>Q9PGM3</accession>
<reference key="1">
    <citation type="journal article" date="2000" name="Nature">
        <title>The genome sequence of the plant pathogen Xylella fastidiosa.</title>
        <authorList>
            <person name="Simpson A.J.G."/>
            <person name="Reinach F.C."/>
            <person name="Arruda P."/>
            <person name="Abreu F.A."/>
            <person name="Acencio M."/>
            <person name="Alvarenga R."/>
            <person name="Alves L.M.C."/>
            <person name="Araya J.E."/>
            <person name="Baia G.S."/>
            <person name="Baptista C.S."/>
            <person name="Barros M.H."/>
            <person name="Bonaccorsi E.D."/>
            <person name="Bordin S."/>
            <person name="Bove J.M."/>
            <person name="Briones M.R.S."/>
            <person name="Bueno M.R.P."/>
            <person name="Camargo A.A."/>
            <person name="Camargo L.E.A."/>
            <person name="Carraro D.M."/>
            <person name="Carrer H."/>
            <person name="Colauto N.B."/>
            <person name="Colombo C."/>
            <person name="Costa F.F."/>
            <person name="Costa M.C.R."/>
            <person name="Costa-Neto C.M."/>
            <person name="Coutinho L.L."/>
            <person name="Cristofani M."/>
            <person name="Dias-Neto E."/>
            <person name="Docena C."/>
            <person name="El-Dorry H."/>
            <person name="Facincani A.P."/>
            <person name="Ferreira A.J.S."/>
            <person name="Ferreira V.C.A."/>
            <person name="Ferro J.A."/>
            <person name="Fraga J.S."/>
            <person name="Franca S.C."/>
            <person name="Franco M.C."/>
            <person name="Frohme M."/>
            <person name="Furlan L.R."/>
            <person name="Garnier M."/>
            <person name="Goldman G.H."/>
            <person name="Goldman M.H.S."/>
            <person name="Gomes S.L."/>
            <person name="Gruber A."/>
            <person name="Ho P.L."/>
            <person name="Hoheisel J.D."/>
            <person name="Junqueira M.L."/>
            <person name="Kemper E.L."/>
            <person name="Kitajima J.P."/>
            <person name="Krieger J.E."/>
            <person name="Kuramae E.E."/>
            <person name="Laigret F."/>
            <person name="Lambais M.R."/>
            <person name="Leite L.C.C."/>
            <person name="Lemos E.G.M."/>
            <person name="Lemos M.V.F."/>
            <person name="Lopes S.A."/>
            <person name="Lopes C.R."/>
            <person name="Machado J.A."/>
            <person name="Machado M.A."/>
            <person name="Madeira A.M.B.N."/>
            <person name="Madeira H.M.F."/>
            <person name="Marino C.L."/>
            <person name="Marques M.V."/>
            <person name="Martins E.A.L."/>
            <person name="Martins E.M.F."/>
            <person name="Matsukuma A.Y."/>
            <person name="Menck C.F.M."/>
            <person name="Miracca E.C."/>
            <person name="Miyaki C.Y."/>
            <person name="Monteiro-Vitorello C.B."/>
            <person name="Moon D.H."/>
            <person name="Nagai M.A."/>
            <person name="Nascimento A.L.T.O."/>
            <person name="Netto L.E.S."/>
            <person name="Nhani A. Jr."/>
            <person name="Nobrega F.G."/>
            <person name="Nunes L.R."/>
            <person name="Oliveira M.A."/>
            <person name="de Oliveira M.C."/>
            <person name="de Oliveira R.C."/>
            <person name="Palmieri D.A."/>
            <person name="Paris A."/>
            <person name="Peixoto B.R."/>
            <person name="Pereira G.A.G."/>
            <person name="Pereira H.A. Jr."/>
            <person name="Pesquero J.B."/>
            <person name="Quaggio R.B."/>
            <person name="Roberto P.G."/>
            <person name="Rodrigues V."/>
            <person name="de Rosa A.J.M."/>
            <person name="de Rosa V.E. Jr."/>
            <person name="de Sa R.G."/>
            <person name="Santelli R.V."/>
            <person name="Sawasaki H.E."/>
            <person name="da Silva A.C.R."/>
            <person name="da Silva A.M."/>
            <person name="da Silva F.R."/>
            <person name="Silva W.A. Jr."/>
            <person name="da Silveira J.F."/>
            <person name="Silvestri M.L.Z."/>
            <person name="Siqueira W.J."/>
            <person name="de Souza A.A."/>
            <person name="de Souza A.P."/>
            <person name="Terenzi M.F."/>
            <person name="Truffi D."/>
            <person name="Tsai S.M."/>
            <person name="Tsuhako M.H."/>
            <person name="Vallada H."/>
            <person name="Van Sluys M.A."/>
            <person name="Verjovski-Almeida S."/>
            <person name="Vettore A.L."/>
            <person name="Zago M.A."/>
            <person name="Zatz M."/>
            <person name="Meidanis J."/>
            <person name="Setubal J.C."/>
        </authorList>
    </citation>
    <scope>NUCLEOTIDE SEQUENCE [LARGE SCALE GENOMIC DNA]</scope>
    <source>
        <strain>9a5c</strain>
    </source>
</reference>
<dbReference type="EC" id="2.7.4.3" evidence="1"/>
<dbReference type="EMBL" id="AE003849">
    <property type="protein sequence ID" value="AAF83088.1"/>
    <property type="status" value="ALT_INIT"/>
    <property type="molecule type" value="Genomic_DNA"/>
</dbReference>
<dbReference type="PIR" id="B82825">
    <property type="entry name" value="B82825"/>
</dbReference>
<dbReference type="RefSeq" id="WP_010892815.1">
    <property type="nucleotide sequence ID" value="NC_002488.3"/>
</dbReference>
<dbReference type="SMR" id="Q9PGM3"/>
<dbReference type="STRING" id="160492.XF_0275"/>
<dbReference type="KEGG" id="xfa:XF_0275"/>
<dbReference type="eggNOG" id="COG0563">
    <property type="taxonomic scope" value="Bacteria"/>
</dbReference>
<dbReference type="HOGENOM" id="CLU_032354_1_2_6"/>
<dbReference type="UniPathway" id="UPA00588">
    <property type="reaction ID" value="UER00649"/>
</dbReference>
<dbReference type="Proteomes" id="UP000000812">
    <property type="component" value="Chromosome"/>
</dbReference>
<dbReference type="GO" id="GO:0005737">
    <property type="term" value="C:cytoplasm"/>
    <property type="evidence" value="ECO:0007669"/>
    <property type="project" value="UniProtKB-SubCell"/>
</dbReference>
<dbReference type="GO" id="GO:0004017">
    <property type="term" value="F:adenylate kinase activity"/>
    <property type="evidence" value="ECO:0007669"/>
    <property type="project" value="UniProtKB-UniRule"/>
</dbReference>
<dbReference type="GO" id="GO:0005524">
    <property type="term" value="F:ATP binding"/>
    <property type="evidence" value="ECO:0007669"/>
    <property type="project" value="UniProtKB-UniRule"/>
</dbReference>
<dbReference type="GO" id="GO:0044209">
    <property type="term" value="P:AMP salvage"/>
    <property type="evidence" value="ECO:0007669"/>
    <property type="project" value="UniProtKB-UniRule"/>
</dbReference>
<dbReference type="CDD" id="cd01428">
    <property type="entry name" value="ADK"/>
    <property type="match status" value="1"/>
</dbReference>
<dbReference type="Gene3D" id="3.40.50.300">
    <property type="entry name" value="P-loop containing nucleotide triphosphate hydrolases"/>
    <property type="match status" value="1"/>
</dbReference>
<dbReference type="HAMAP" id="MF_00235">
    <property type="entry name" value="Adenylate_kinase_Adk"/>
    <property type="match status" value="1"/>
</dbReference>
<dbReference type="InterPro" id="IPR006259">
    <property type="entry name" value="Adenyl_kin_sub"/>
</dbReference>
<dbReference type="InterPro" id="IPR000850">
    <property type="entry name" value="Adenylat/UMP-CMP_kin"/>
</dbReference>
<dbReference type="InterPro" id="IPR033690">
    <property type="entry name" value="Adenylat_kinase_CS"/>
</dbReference>
<dbReference type="InterPro" id="IPR027417">
    <property type="entry name" value="P-loop_NTPase"/>
</dbReference>
<dbReference type="NCBIfam" id="TIGR01351">
    <property type="entry name" value="adk"/>
    <property type="match status" value="1"/>
</dbReference>
<dbReference type="NCBIfam" id="NF001381">
    <property type="entry name" value="PRK00279.1-3"/>
    <property type="match status" value="1"/>
</dbReference>
<dbReference type="NCBIfam" id="NF011100">
    <property type="entry name" value="PRK14527.1"/>
    <property type="match status" value="1"/>
</dbReference>
<dbReference type="NCBIfam" id="NF011101">
    <property type="entry name" value="PRK14528.1"/>
    <property type="match status" value="1"/>
</dbReference>
<dbReference type="NCBIfam" id="NF011104">
    <property type="entry name" value="PRK14531.1"/>
    <property type="match status" value="1"/>
</dbReference>
<dbReference type="NCBIfam" id="NF011105">
    <property type="entry name" value="PRK14532.1"/>
    <property type="match status" value="1"/>
</dbReference>
<dbReference type="PANTHER" id="PTHR23359">
    <property type="entry name" value="NUCLEOTIDE KINASE"/>
    <property type="match status" value="1"/>
</dbReference>
<dbReference type="Pfam" id="PF00406">
    <property type="entry name" value="ADK"/>
    <property type="match status" value="1"/>
</dbReference>
<dbReference type="PRINTS" id="PR00094">
    <property type="entry name" value="ADENYLTKNASE"/>
</dbReference>
<dbReference type="SUPFAM" id="SSF52540">
    <property type="entry name" value="P-loop containing nucleoside triphosphate hydrolases"/>
    <property type="match status" value="1"/>
</dbReference>
<dbReference type="PROSITE" id="PS00113">
    <property type="entry name" value="ADENYLATE_KINASE"/>
    <property type="match status" value="1"/>
</dbReference>
<organism>
    <name type="scientific">Xylella fastidiosa (strain 9a5c)</name>
    <dbReference type="NCBI Taxonomy" id="160492"/>
    <lineage>
        <taxon>Bacteria</taxon>
        <taxon>Pseudomonadati</taxon>
        <taxon>Pseudomonadota</taxon>
        <taxon>Gammaproteobacteria</taxon>
        <taxon>Lysobacterales</taxon>
        <taxon>Lysobacteraceae</taxon>
        <taxon>Xylella</taxon>
    </lineage>
</organism>
<gene>
    <name evidence="1" type="primary">adk</name>
    <name type="ordered locus">XF_0275</name>
</gene>
<name>KAD_XYLFA</name>
<protein>
    <recommendedName>
        <fullName evidence="1">Adenylate kinase</fullName>
        <shortName evidence="1">AK</shortName>
        <ecNumber evidence="1">2.7.4.3</ecNumber>
    </recommendedName>
    <alternativeName>
        <fullName evidence="1">ATP-AMP transphosphorylase</fullName>
    </alternativeName>
    <alternativeName>
        <fullName evidence="1">ATP:AMP phosphotransferase</fullName>
    </alternativeName>
    <alternativeName>
        <fullName evidence="1">Adenylate monophosphate kinase</fullName>
    </alternativeName>
</protein>